<organism>
    <name type="scientific">Streptococcus mutans serotype c (strain ATCC 700610 / UA159)</name>
    <dbReference type="NCBI Taxonomy" id="210007"/>
    <lineage>
        <taxon>Bacteria</taxon>
        <taxon>Bacillati</taxon>
        <taxon>Bacillota</taxon>
        <taxon>Bacilli</taxon>
        <taxon>Lactobacillales</taxon>
        <taxon>Streptococcaceae</taxon>
        <taxon>Streptococcus</taxon>
    </lineage>
</organism>
<accession>Q8DSG4</accession>
<name>GATC_STRMU</name>
<sequence>MKISEEEVRHVANLSKLKFSDDETTEFATTLTKIVDMVELLNEVDTQGVPFTSNVADNINYMREDVSVAGWDREQLFKNVPEHEDGLIKVPAIIDEGGDA</sequence>
<comment type="function">
    <text evidence="1">Allows the formation of correctly charged Asn-tRNA(Asn) or Gln-tRNA(Gln) through the transamidation of misacylated Asp-tRNA(Asn) or Glu-tRNA(Gln) in organisms which lack either or both of asparaginyl-tRNA or glutaminyl-tRNA synthetases. The reaction takes place in the presence of glutamine and ATP through an activated phospho-Asp-tRNA(Asn) or phospho-Glu-tRNA(Gln).</text>
</comment>
<comment type="catalytic activity">
    <reaction evidence="1">
        <text>L-glutamyl-tRNA(Gln) + L-glutamine + ATP + H2O = L-glutaminyl-tRNA(Gln) + L-glutamate + ADP + phosphate + H(+)</text>
        <dbReference type="Rhea" id="RHEA:17521"/>
        <dbReference type="Rhea" id="RHEA-COMP:9681"/>
        <dbReference type="Rhea" id="RHEA-COMP:9684"/>
        <dbReference type="ChEBI" id="CHEBI:15377"/>
        <dbReference type="ChEBI" id="CHEBI:15378"/>
        <dbReference type="ChEBI" id="CHEBI:29985"/>
        <dbReference type="ChEBI" id="CHEBI:30616"/>
        <dbReference type="ChEBI" id="CHEBI:43474"/>
        <dbReference type="ChEBI" id="CHEBI:58359"/>
        <dbReference type="ChEBI" id="CHEBI:78520"/>
        <dbReference type="ChEBI" id="CHEBI:78521"/>
        <dbReference type="ChEBI" id="CHEBI:456216"/>
    </reaction>
</comment>
<comment type="catalytic activity">
    <reaction evidence="1">
        <text>L-aspartyl-tRNA(Asn) + L-glutamine + ATP + H2O = L-asparaginyl-tRNA(Asn) + L-glutamate + ADP + phosphate + 2 H(+)</text>
        <dbReference type="Rhea" id="RHEA:14513"/>
        <dbReference type="Rhea" id="RHEA-COMP:9674"/>
        <dbReference type="Rhea" id="RHEA-COMP:9677"/>
        <dbReference type="ChEBI" id="CHEBI:15377"/>
        <dbReference type="ChEBI" id="CHEBI:15378"/>
        <dbReference type="ChEBI" id="CHEBI:29985"/>
        <dbReference type="ChEBI" id="CHEBI:30616"/>
        <dbReference type="ChEBI" id="CHEBI:43474"/>
        <dbReference type="ChEBI" id="CHEBI:58359"/>
        <dbReference type="ChEBI" id="CHEBI:78515"/>
        <dbReference type="ChEBI" id="CHEBI:78516"/>
        <dbReference type="ChEBI" id="CHEBI:456216"/>
    </reaction>
</comment>
<comment type="subunit">
    <text evidence="1">Heterotrimer of A, B and C subunits.</text>
</comment>
<comment type="similarity">
    <text evidence="1">Belongs to the GatC family.</text>
</comment>
<keyword id="KW-0067">ATP-binding</keyword>
<keyword id="KW-0436">Ligase</keyword>
<keyword id="KW-0547">Nucleotide-binding</keyword>
<keyword id="KW-0648">Protein biosynthesis</keyword>
<keyword id="KW-1185">Reference proteome</keyword>
<gene>
    <name evidence="1" type="primary">gatC</name>
    <name type="ordered locus">SMU_1821c</name>
</gene>
<proteinExistence type="inferred from homology"/>
<reference key="1">
    <citation type="journal article" date="2002" name="Proc. Natl. Acad. Sci. U.S.A.">
        <title>Genome sequence of Streptococcus mutans UA159, a cariogenic dental pathogen.</title>
        <authorList>
            <person name="Ajdic D.J."/>
            <person name="McShan W.M."/>
            <person name="McLaughlin R.E."/>
            <person name="Savic G."/>
            <person name="Chang J."/>
            <person name="Carson M.B."/>
            <person name="Primeaux C."/>
            <person name="Tian R."/>
            <person name="Kenton S."/>
            <person name="Jia H.G."/>
            <person name="Lin S.P."/>
            <person name="Qian Y."/>
            <person name="Li S."/>
            <person name="Zhu H."/>
            <person name="Najar F.Z."/>
            <person name="Lai H."/>
            <person name="White J."/>
            <person name="Roe B.A."/>
            <person name="Ferretti J.J."/>
        </authorList>
    </citation>
    <scope>NUCLEOTIDE SEQUENCE [LARGE SCALE GENOMIC DNA]</scope>
    <source>
        <strain>ATCC 700610 / UA159</strain>
    </source>
</reference>
<dbReference type="EC" id="6.3.5.-" evidence="1"/>
<dbReference type="EMBL" id="AE014133">
    <property type="protein sequence ID" value="AAN59446.1"/>
    <property type="molecule type" value="Genomic_DNA"/>
</dbReference>
<dbReference type="RefSeq" id="NP_722140.1">
    <property type="nucleotide sequence ID" value="NC_004350.2"/>
</dbReference>
<dbReference type="RefSeq" id="WP_002263475.1">
    <property type="nucleotide sequence ID" value="NC_004350.2"/>
</dbReference>
<dbReference type="SMR" id="Q8DSG4"/>
<dbReference type="STRING" id="210007.SMU_1821c"/>
<dbReference type="GeneID" id="93858761"/>
<dbReference type="KEGG" id="smu:SMU_1821c"/>
<dbReference type="PATRIC" id="fig|210007.7.peg.1626"/>
<dbReference type="eggNOG" id="COG0721">
    <property type="taxonomic scope" value="Bacteria"/>
</dbReference>
<dbReference type="HOGENOM" id="CLU_105899_1_2_9"/>
<dbReference type="OrthoDB" id="9813938at2"/>
<dbReference type="PhylomeDB" id="Q8DSG4"/>
<dbReference type="Proteomes" id="UP000002512">
    <property type="component" value="Chromosome"/>
</dbReference>
<dbReference type="GO" id="GO:0050566">
    <property type="term" value="F:asparaginyl-tRNA synthase (glutamine-hydrolyzing) activity"/>
    <property type="evidence" value="ECO:0007669"/>
    <property type="project" value="RHEA"/>
</dbReference>
<dbReference type="GO" id="GO:0005524">
    <property type="term" value="F:ATP binding"/>
    <property type="evidence" value="ECO:0007669"/>
    <property type="project" value="UniProtKB-KW"/>
</dbReference>
<dbReference type="GO" id="GO:0050567">
    <property type="term" value="F:glutaminyl-tRNA synthase (glutamine-hydrolyzing) activity"/>
    <property type="evidence" value="ECO:0007669"/>
    <property type="project" value="UniProtKB-UniRule"/>
</dbReference>
<dbReference type="GO" id="GO:0070681">
    <property type="term" value="P:glutaminyl-tRNAGln biosynthesis via transamidation"/>
    <property type="evidence" value="ECO:0007669"/>
    <property type="project" value="TreeGrafter"/>
</dbReference>
<dbReference type="GO" id="GO:0006450">
    <property type="term" value="P:regulation of translational fidelity"/>
    <property type="evidence" value="ECO:0007669"/>
    <property type="project" value="InterPro"/>
</dbReference>
<dbReference type="GO" id="GO:0006412">
    <property type="term" value="P:translation"/>
    <property type="evidence" value="ECO:0007669"/>
    <property type="project" value="UniProtKB-UniRule"/>
</dbReference>
<dbReference type="Gene3D" id="1.10.20.60">
    <property type="entry name" value="Glu-tRNAGln amidotransferase C subunit, N-terminal domain"/>
    <property type="match status" value="1"/>
</dbReference>
<dbReference type="HAMAP" id="MF_00122">
    <property type="entry name" value="GatC"/>
    <property type="match status" value="1"/>
</dbReference>
<dbReference type="InterPro" id="IPR036113">
    <property type="entry name" value="Asp/Glu-ADT_sf_sub_c"/>
</dbReference>
<dbReference type="InterPro" id="IPR003837">
    <property type="entry name" value="GatC"/>
</dbReference>
<dbReference type="NCBIfam" id="TIGR00135">
    <property type="entry name" value="gatC"/>
    <property type="match status" value="1"/>
</dbReference>
<dbReference type="PANTHER" id="PTHR15004">
    <property type="entry name" value="GLUTAMYL-TRNA(GLN) AMIDOTRANSFERASE SUBUNIT C, MITOCHONDRIAL"/>
    <property type="match status" value="1"/>
</dbReference>
<dbReference type="PANTHER" id="PTHR15004:SF0">
    <property type="entry name" value="GLUTAMYL-TRNA(GLN) AMIDOTRANSFERASE SUBUNIT C, MITOCHONDRIAL"/>
    <property type="match status" value="1"/>
</dbReference>
<dbReference type="Pfam" id="PF02686">
    <property type="entry name" value="GatC"/>
    <property type="match status" value="1"/>
</dbReference>
<dbReference type="SUPFAM" id="SSF141000">
    <property type="entry name" value="Glu-tRNAGln amidotransferase C subunit"/>
    <property type="match status" value="1"/>
</dbReference>
<protein>
    <recommendedName>
        <fullName evidence="1">Aspartyl/glutamyl-tRNA(Asn/Gln) amidotransferase subunit C</fullName>
        <shortName evidence="1">Asp/Glu-ADT subunit C</shortName>
        <ecNumber evidence="1">6.3.5.-</ecNumber>
    </recommendedName>
</protein>
<feature type="chain" id="PRO_0000105342" description="Aspartyl/glutamyl-tRNA(Asn/Gln) amidotransferase subunit C">
    <location>
        <begin position="1"/>
        <end position="100"/>
    </location>
</feature>
<evidence type="ECO:0000255" key="1">
    <source>
        <dbReference type="HAMAP-Rule" id="MF_00122"/>
    </source>
</evidence>